<keyword id="KW-0004">4Fe-4S</keyword>
<keyword id="KW-0148">Chlorophyll</keyword>
<keyword id="KW-0150">Chloroplast</keyword>
<keyword id="KW-0157">Chromophore</keyword>
<keyword id="KW-0249">Electron transport</keyword>
<keyword id="KW-0408">Iron</keyword>
<keyword id="KW-0411">Iron-sulfur</keyword>
<keyword id="KW-0460">Magnesium</keyword>
<keyword id="KW-0472">Membrane</keyword>
<keyword id="KW-0479">Metal-binding</keyword>
<keyword id="KW-0560">Oxidoreductase</keyword>
<keyword id="KW-0602">Photosynthesis</keyword>
<keyword id="KW-0603">Photosystem I</keyword>
<keyword id="KW-0934">Plastid</keyword>
<keyword id="KW-0793">Thylakoid</keyword>
<keyword id="KW-0812">Transmembrane</keyword>
<keyword id="KW-1133">Transmembrane helix</keyword>
<keyword id="KW-0813">Transport</keyword>
<reference key="1">
    <citation type="submission" date="2007-03" db="EMBL/GenBank/DDBJ databases">
        <title>Sequencing analysis of Lepidium virginicum JO26 chloroplast DNA.</title>
        <authorList>
            <person name="Hosouchi T."/>
            <person name="Tsuruoka H."/>
            <person name="Kotani H."/>
        </authorList>
    </citation>
    <scope>NUCLEOTIDE SEQUENCE [LARGE SCALE GENOMIC DNA]</scope>
</reference>
<gene>
    <name evidence="1" type="primary">psaB</name>
</gene>
<proteinExistence type="inferred from homology"/>
<comment type="function">
    <text evidence="1">PsaA and PsaB bind P700, the primary electron donor of photosystem I (PSI), as well as the electron acceptors A0, A1 and FX. PSI is a plastocyanin-ferredoxin oxidoreductase, converting photonic excitation into a charge separation, which transfers an electron from the donor P700 chlorophyll pair to the spectroscopically characterized acceptors A0, A1, FX, FA and FB in turn. Oxidized P700 is reduced on the lumenal side of the thylakoid membrane by plastocyanin.</text>
</comment>
<comment type="catalytic activity">
    <reaction evidence="1">
        <text>reduced [plastocyanin] + hnu + oxidized [2Fe-2S]-[ferredoxin] = oxidized [plastocyanin] + reduced [2Fe-2S]-[ferredoxin]</text>
        <dbReference type="Rhea" id="RHEA:30407"/>
        <dbReference type="Rhea" id="RHEA-COMP:10000"/>
        <dbReference type="Rhea" id="RHEA-COMP:10001"/>
        <dbReference type="Rhea" id="RHEA-COMP:10039"/>
        <dbReference type="Rhea" id="RHEA-COMP:10040"/>
        <dbReference type="ChEBI" id="CHEBI:29036"/>
        <dbReference type="ChEBI" id="CHEBI:30212"/>
        <dbReference type="ChEBI" id="CHEBI:33737"/>
        <dbReference type="ChEBI" id="CHEBI:33738"/>
        <dbReference type="ChEBI" id="CHEBI:49552"/>
        <dbReference type="EC" id="1.97.1.12"/>
    </reaction>
</comment>
<comment type="cofactor">
    <text evidence="1">P700 is a chlorophyll a/chlorophyll a' dimer, A0 is one or more chlorophyll a, A1 is one or both phylloquinones and FX is a shared 4Fe-4S iron-sulfur center.</text>
</comment>
<comment type="subunit">
    <text evidence="1">The PsaA/B heterodimer binds the P700 chlorophyll special pair and subsequent electron acceptors. PSI consists of a core antenna complex that captures photons, and an electron transfer chain that converts photonic excitation into a charge separation. The eukaryotic PSI reaction center is composed of at least 11 subunits.</text>
</comment>
<comment type="subcellular location">
    <subcellularLocation>
        <location evidence="1">Plastid</location>
        <location evidence="1">Chloroplast thylakoid membrane</location>
        <topology evidence="1">Multi-pass membrane protein</topology>
    </subcellularLocation>
</comment>
<comment type="similarity">
    <text evidence="1">Belongs to the PsaA/PsaB family.</text>
</comment>
<dbReference type="EC" id="1.97.1.12" evidence="1"/>
<dbReference type="EMBL" id="AP009374">
    <property type="protein sequence ID" value="BAF50460.1"/>
    <property type="molecule type" value="Genomic_DNA"/>
</dbReference>
<dbReference type="RefSeq" id="YP_001123636.1">
    <property type="nucleotide sequence ID" value="NC_009273.1"/>
</dbReference>
<dbReference type="SMR" id="A4QLA5"/>
<dbReference type="GeneID" id="4961972"/>
<dbReference type="GO" id="GO:0009535">
    <property type="term" value="C:chloroplast thylakoid membrane"/>
    <property type="evidence" value="ECO:0007669"/>
    <property type="project" value="UniProtKB-SubCell"/>
</dbReference>
<dbReference type="GO" id="GO:0009522">
    <property type="term" value="C:photosystem I"/>
    <property type="evidence" value="ECO:0007669"/>
    <property type="project" value="UniProtKB-KW"/>
</dbReference>
<dbReference type="GO" id="GO:0051539">
    <property type="term" value="F:4 iron, 4 sulfur cluster binding"/>
    <property type="evidence" value="ECO:0007669"/>
    <property type="project" value="UniProtKB-KW"/>
</dbReference>
<dbReference type="GO" id="GO:0016168">
    <property type="term" value="F:chlorophyll binding"/>
    <property type="evidence" value="ECO:0007669"/>
    <property type="project" value="UniProtKB-KW"/>
</dbReference>
<dbReference type="GO" id="GO:0009055">
    <property type="term" value="F:electron transfer activity"/>
    <property type="evidence" value="ECO:0007669"/>
    <property type="project" value="UniProtKB-UniRule"/>
</dbReference>
<dbReference type="GO" id="GO:0000287">
    <property type="term" value="F:magnesium ion binding"/>
    <property type="evidence" value="ECO:0007669"/>
    <property type="project" value="UniProtKB-UniRule"/>
</dbReference>
<dbReference type="GO" id="GO:0016491">
    <property type="term" value="F:oxidoreductase activity"/>
    <property type="evidence" value="ECO:0007669"/>
    <property type="project" value="UniProtKB-KW"/>
</dbReference>
<dbReference type="GO" id="GO:0015979">
    <property type="term" value="P:photosynthesis"/>
    <property type="evidence" value="ECO:0007669"/>
    <property type="project" value="UniProtKB-UniRule"/>
</dbReference>
<dbReference type="FunFam" id="1.20.1130.10:FF:000001">
    <property type="entry name" value="Photosystem I P700 chlorophyll a apoprotein A2"/>
    <property type="match status" value="1"/>
</dbReference>
<dbReference type="Gene3D" id="1.20.1130.10">
    <property type="entry name" value="Photosystem I PsaA/PsaB"/>
    <property type="match status" value="1"/>
</dbReference>
<dbReference type="HAMAP" id="MF_00482">
    <property type="entry name" value="PSI_PsaB"/>
    <property type="match status" value="1"/>
</dbReference>
<dbReference type="InterPro" id="IPR001280">
    <property type="entry name" value="PSI_PsaA/B"/>
</dbReference>
<dbReference type="InterPro" id="IPR020586">
    <property type="entry name" value="PSI_PsaA/B_CS"/>
</dbReference>
<dbReference type="InterPro" id="IPR036408">
    <property type="entry name" value="PSI_PsaA/B_sf"/>
</dbReference>
<dbReference type="InterPro" id="IPR006244">
    <property type="entry name" value="PSI_PsaB"/>
</dbReference>
<dbReference type="NCBIfam" id="TIGR01336">
    <property type="entry name" value="psaB"/>
    <property type="match status" value="1"/>
</dbReference>
<dbReference type="PANTHER" id="PTHR30128">
    <property type="entry name" value="OUTER MEMBRANE PROTEIN, OMPA-RELATED"/>
    <property type="match status" value="1"/>
</dbReference>
<dbReference type="PANTHER" id="PTHR30128:SF19">
    <property type="entry name" value="PHOTOSYSTEM I P700 CHLOROPHYLL A APOPROTEIN A1-RELATED"/>
    <property type="match status" value="1"/>
</dbReference>
<dbReference type="Pfam" id="PF00223">
    <property type="entry name" value="PsaA_PsaB"/>
    <property type="match status" value="1"/>
</dbReference>
<dbReference type="PIRSF" id="PIRSF002905">
    <property type="entry name" value="PSI_A"/>
    <property type="match status" value="1"/>
</dbReference>
<dbReference type="PRINTS" id="PR00257">
    <property type="entry name" value="PHOTSYSPSAAB"/>
</dbReference>
<dbReference type="SUPFAM" id="SSF81558">
    <property type="entry name" value="Photosystem I subunits PsaA/PsaB"/>
    <property type="match status" value="1"/>
</dbReference>
<dbReference type="PROSITE" id="PS00419">
    <property type="entry name" value="PHOTOSYSTEM_I_PSAAB"/>
    <property type="match status" value="1"/>
</dbReference>
<protein>
    <recommendedName>
        <fullName evidence="1">Photosystem I P700 chlorophyll a apoprotein A2</fullName>
        <ecNumber evidence="1">1.97.1.12</ecNumber>
    </recommendedName>
    <alternativeName>
        <fullName evidence="1">PSI-B</fullName>
    </alternativeName>
    <alternativeName>
        <fullName evidence="1">PsaB</fullName>
    </alternativeName>
</protein>
<geneLocation type="chloroplast"/>
<evidence type="ECO:0000255" key="1">
    <source>
        <dbReference type="HAMAP-Rule" id="MF_00482"/>
    </source>
</evidence>
<name>PSAB_LEPVR</name>
<accession>A4QLA5</accession>
<organism>
    <name type="scientific">Lepidium virginicum</name>
    <name type="common">Virginia pepperweed</name>
    <dbReference type="NCBI Taxonomy" id="59292"/>
    <lineage>
        <taxon>Eukaryota</taxon>
        <taxon>Viridiplantae</taxon>
        <taxon>Streptophyta</taxon>
        <taxon>Embryophyta</taxon>
        <taxon>Tracheophyta</taxon>
        <taxon>Spermatophyta</taxon>
        <taxon>Magnoliopsida</taxon>
        <taxon>eudicotyledons</taxon>
        <taxon>Gunneridae</taxon>
        <taxon>Pentapetalae</taxon>
        <taxon>rosids</taxon>
        <taxon>malvids</taxon>
        <taxon>Brassicales</taxon>
        <taxon>Brassicaceae</taxon>
        <taxon>Lepidieae</taxon>
        <taxon>Lepidium</taxon>
    </lineage>
</organism>
<sequence length="734" mass="82426">MALRFPRFSQGLAQDPTTRRIWFGIATAHDFESHDDITEERLYQNIFASHFGQLAIIFLWTSGNLFHVAWQGNFETWVQDPLHVRPIAHAIWDPHFGQPAVEAFTRGGALGPVNIAYSGVYQWWYTIGLRTNEDLYTGALFLLFLSALSLIGGWLHLQPKWKPRVSWFKNAESRLNHHLSGLFGVSSLAWTGHLVHVAIPASRGENVRWNNFLNVLPHPQGLGPLFTGQWNLYAQNPDSSSHLFGTSQGSGTAILTLLGGFHPQTQSLWLTDMAHHHLAIAILFLIAGHMYRTNFGIGHSIKDLLEAHIPPGGRLGRGHKGLYDTINNSIHFQLGLALASLGVITSLVAQHMYSLPAYAFIAQDFTTQAALYTHHQYIAGFIMTGAFAHGAIFFIRDYNPEQNEDNVLARMLDHKEAIISHLSWASLFLGFHTLGLYVHNDVMLAFGTPEKQILIEPIFAQWIQSAHGKTSYGFDVLLSSTSGPAFNAGRSIWLPGWLNAINENSNSLFLTIGPGDFLVHHAIALGLHTTTLILVKGALDARGSKLMPDKKDFGYSFPCDGPGRGGTCDISAWDAFYLAVFWMLNTIGWVTFYWHWKHITLWQGNVSQFNESSTYLMGWLRDYLWLNSSQLINGYNPFGMNSLSVWAWMFLFGHLVWATGFMFLISWRGYWQELIETLAWAHERTPLANLIRWKDKPVALSIVQARLVGLAHFSVGYIFTYAAFLIASTSGKFG</sequence>
<feature type="chain" id="PRO_0000300048" description="Photosystem I P700 chlorophyll a apoprotein A2">
    <location>
        <begin position="1"/>
        <end position="734"/>
    </location>
</feature>
<feature type="transmembrane region" description="Helical; Name=I" evidence="1">
    <location>
        <begin position="46"/>
        <end position="69"/>
    </location>
</feature>
<feature type="transmembrane region" description="Helical; Name=II" evidence="1">
    <location>
        <begin position="135"/>
        <end position="158"/>
    </location>
</feature>
<feature type="transmembrane region" description="Helical; Name=III" evidence="1">
    <location>
        <begin position="175"/>
        <end position="199"/>
    </location>
</feature>
<feature type="transmembrane region" description="Helical; Name=IV" evidence="1">
    <location>
        <begin position="273"/>
        <end position="291"/>
    </location>
</feature>
<feature type="transmembrane region" description="Helical; Name=V" evidence="1">
    <location>
        <begin position="330"/>
        <end position="353"/>
    </location>
</feature>
<feature type="transmembrane region" description="Helical; Name=VI" evidence="1">
    <location>
        <begin position="369"/>
        <end position="395"/>
    </location>
</feature>
<feature type="transmembrane region" description="Helical; Name=VII" evidence="1">
    <location>
        <begin position="417"/>
        <end position="439"/>
    </location>
</feature>
<feature type="transmembrane region" description="Helical; Name=VIII" evidence="1">
    <location>
        <begin position="517"/>
        <end position="535"/>
    </location>
</feature>
<feature type="transmembrane region" description="Helical; Name=IX" evidence="1">
    <location>
        <begin position="575"/>
        <end position="596"/>
    </location>
</feature>
<feature type="transmembrane region" description="Helical; Name=X" evidence="1">
    <location>
        <begin position="643"/>
        <end position="665"/>
    </location>
</feature>
<feature type="transmembrane region" description="Helical; Name=XI" evidence="1">
    <location>
        <begin position="707"/>
        <end position="727"/>
    </location>
</feature>
<feature type="binding site" evidence="1">
    <location>
        <position position="559"/>
    </location>
    <ligand>
        <name>[4Fe-4S] cluster</name>
        <dbReference type="ChEBI" id="CHEBI:49883"/>
        <note>ligand shared between dimeric partners</note>
    </ligand>
</feature>
<feature type="binding site" evidence="1">
    <location>
        <position position="568"/>
    </location>
    <ligand>
        <name>[4Fe-4S] cluster</name>
        <dbReference type="ChEBI" id="CHEBI:49883"/>
        <note>ligand shared between dimeric partners</note>
    </ligand>
</feature>
<feature type="binding site" description="axial binding residue" evidence="1">
    <location>
        <position position="654"/>
    </location>
    <ligand>
        <name>chlorophyll a</name>
        <dbReference type="ChEBI" id="CHEBI:58416"/>
        <label>B1</label>
    </ligand>
    <ligandPart>
        <name>Mg</name>
        <dbReference type="ChEBI" id="CHEBI:25107"/>
    </ligandPart>
</feature>
<feature type="binding site" description="axial binding residue" evidence="1">
    <location>
        <position position="662"/>
    </location>
    <ligand>
        <name>chlorophyll a</name>
        <dbReference type="ChEBI" id="CHEBI:58416"/>
        <label>B3</label>
    </ligand>
    <ligandPart>
        <name>Mg</name>
        <dbReference type="ChEBI" id="CHEBI:25107"/>
    </ligandPart>
</feature>
<feature type="binding site" evidence="1">
    <location>
        <position position="670"/>
    </location>
    <ligand>
        <name>chlorophyll a</name>
        <dbReference type="ChEBI" id="CHEBI:58416"/>
        <label>B3</label>
    </ligand>
</feature>
<feature type="binding site" evidence="1">
    <location>
        <position position="671"/>
    </location>
    <ligand>
        <name>phylloquinone</name>
        <dbReference type="ChEBI" id="CHEBI:18067"/>
        <label>B</label>
    </ligand>
</feature>